<organism>
    <name type="scientific">Parvibaculum lavamentivorans (strain DS-1 / DSM 13023 / NCIMB 13966)</name>
    <dbReference type="NCBI Taxonomy" id="402881"/>
    <lineage>
        <taxon>Bacteria</taxon>
        <taxon>Pseudomonadati</taxon>
        <taxon>Pseudomonadota</taxon>
        <taxon>Alphaproteobacteria</taxon>
        <taxon>Hyphomicrobiales</taxon>
        <taxon>Parvibaculaceae</taxon>
        <taxon>Parvibaculum</taxon>
    </lineage>
</organism>
<accession>A7HXX9</accession>
<keyword id="KW-0067">ATP-binding</keyword>
<keyword id="KW-0315">Glutamine amidotransferase</keyword>
<keyword id="KW-0436">Ligase</keyword>
<keyword id="KW-0460">Magnesium</keyword>
<keyword id="KW-0479">Metal-binding</keyword>
<keyword id="KW-0547">Nucleotide-binding</keyword>
<keyword id="KW-0665">Pyrimidine biosynthesis</keyword>
<keyword id="KW-1185">Reference proteome</keyword>
<name>PYRG_PARL1</name>
<evidence type="ECO:0000255" key="1">
    <source>
        <dbReference type="HAMAP-Rule" id="MF_01227"/>
    </source>
</evidence>
<protein>
    <recommendedName>
        <fullName evidence="1">CTP synthase</fullName>
        <ecNumber evidence="1">6.3.4.2</ecNumber>
    </recommendedName>
    <alternativeName>
        <fullName evidence="1">Cytidine 5'-triphosphate synthase</fullName>
    </alternativeName>
    <alternativeName>
        <fullName evidence="1">Cytidine triphosphate synthetase</fullName>
        <shortName evidence="1">CTP synthetase</shortName>
        <shortName evidence="1">CTPS</shortName>
    </alternativeName>
    <alternativeName>
        <fullName evidence="1">UTP--ammonia ligase</fullName>
    </alternativeName>
</protein>
<gene>
    <name evidence="1" type="primary">pyrG</name>
    <name type="ordered locus">Plav_3156</name>
</gene>
<reference key="1">
    <citation type="journal article" date="2011" name="Stand. Genomic Sci.">
        <title>Complete genome sequence of Parvibaculum lavamentivorans type strain (DS-1(T)).</title>
        <authorList>
            <person name="Schleheck D."/>
            <person name="Weiss M."/>
            <person name="Pitluck S."/>
            <person name="Bruce D."/>
            <person name="Land M.L."/>
            <person name="Han S."/>
            <person name="Saunders E."/>
            <person name="Tapia R."/>
            <person name="Detter C."/>
            <person name="Brettin T."/>
            <person name="Han J."/>
            <person name="Woyke T."/>
            <person name="Goodwin L."/>
            <person name="Pennacchio L."/>
            <person name="Nolan M."/>
            <person name="Cook A.M."/>
            <person name="Kjelleberg S."/>
            <person name="Thomas T."/>
        </authorList>
    </citation>
    <scope>NUCLEOTIDE SEQUENCE [LARGE SCALE GENOMIC DNA]</scope>
    <source>
        <strain>DS-1 / DSM 13023 / NCIMB 13966</strain>
    </source>
</reference>
<feature type="chain" id="PRO_1000139511" description="CTP synthase">
    <location>
        <begin position="1"/>
        <end position="542"/>
    </location>
</feature>
<feature type="domain" description="Glutamine amidotransferase type-1" evidence="1">
    <location>
        <begin position="291"/>
        <end position="541"/>
    </location>
</feature>
<feature type="region of interest" description="Amidoligase domain" evidence="1">
    <location>
        <begin position="1"/>
        <end position="265"/>
    </location>
</feature>
<feature type="active site" description="Nucleophile; for glutamine hydrolysis" evidence="1">
    <location>
        <position position="380"/>
    </location>
</feature>
<feature type="active site" evidence="1">
    <location>
        <position position="514"/>
    </location>
</feature>
<feature type="active site" evidence="1">
    <location>
        <position position="516"/>
    </location>
</feature>
<feature type="binding site" evidence="1">
    <location>
        <position position="13"/>
    </location>
    <ligand>
        <name>CTP</name>
        <dbReference type="ChEBI" id="CHEBI:37563"/>
        <note>allosteric inhibitor</note>
    </ligand>
</feature>
<feature type="binding site" evidence="1">
    <location>
        <position position="13"/>
    </location>
    <ligand>
        <name>UTP</name>
        <dbReference type="ChEBI" id="CHEBI:46398"/>
    </ligand>
</feature>
<feature type="binding site" evidence="1">
    <location>
        <begin position="14"/>
        <end position="19"/>
    </location>
    <ligand>
        <name>ATP</name>
        <dbReference type="ChEBI" id="CHEBI:30616"/>
    </ligand>
</feature>
<feature type="binding site" evidence="1">
    <location>
        <position position="71"/>
    </location>
    <ligand>
        <name>ATP</name>
        <dbReference type="ChEBI" id="CHEBI:30616"/>
    </ligand>
</feature>
<feature type="binding site" evidence="1">
    <location>
        <position position="71"/>
    </location>
    <ligand>
        <name>Mg(2+)</name>
        <dbReference type="ChEBI" id="CHEBI:18420"/>
    </ligand>
</feature>
<feature type="binding site" evidence="1">
    <location>
        <position position="139"/>
    </location>
    <ligand>
        <name>Mg(2+)</name>
        <dbReference type="ChEBI" id="CHEBI:18420"/>
    </ligand>
</feature>
<feature type="binding site" evidence="1">
    <location>
        <begin position="146"/>
        <end position="148"/>
    </location>
    <ligand>
        <name>CTP</name>
        <dbReference type="ChEBI" id="CHEBI:37563"/>
        <note>allosteric inhibitor</note>
    </ligand>
</feature>
<feature type="binding site" evidence="1">
    <location>
        <begin position="186"/>
        <end position="191"/>
    </location>
    <ligand>
        <name>CTP</name>
        <dbReference type="ChEBI" id="CHEBI:37563"/>
        <note>allosteric inhibitor</note>
    </ligand>
</feature>
<feature type="binding site" evidence="1">
    <location>
        <begin position="186"/>
        <end position="191"/>
    </location>
    <ligand>
        <name>UTP</name>
        <dbReference type="ChEBI" id="CHEBI:46398"/>
    </ligand>
</feature>
<feature type="binding site" evidence="1">
    <location>
        <position position="222"/>
    </location>
    <ligand>
        <name>CTP</name>
        <dbReference type="ChEBI" id="CHEBI:37563"/>
        <note>allosteric inhibitor</note>
    </ligand>
</feature>
<feature type="binding site" evidence="1">
    <location>
        <position position="222"/>
    </location>
    <ligand>
        <name>UTP</name>
        <dbReference type="ChEBI" id="CHEBI:46398"/>
    </ligand>
</feature>
<feature type="binding site" evidence="1">
    <location>
        <position position="353"/>
    </location>
    <ligand>
        <name>L-glutamine</name>
        <dbReference type="ChEBI" id="CHEBI:58359"/>
    </ligand>
</feature>
<feature type="binding site" evidence="1">
    <location>
        <begin position="381"/>
        <end position="384"/>
    </location>
    <ligand>
        <name>L-glutamine</name>
        <dbReference type="ChEBI" id="CHEBI:58359"/>
    </ligand>
</feature>
<feature type="binding site" evidence="1">
    <location>
        <position position="404"/>
    </location>
    <ligand>
        <name>L-glutamine</name>
        <dbReference type="ChEBI" id="CHEBI:58359"/>
    </ligand>
</feature>
<feature type="binding site" evidence="1">
    <location>
        <position position="469"/>
    </location>
    <ligand>
        <name>L-glutamine</name>
        <dbReference type="ChEBI" id="CHEBI:58359"/>
    </ligand>
</feature>
<sequence length="542" mass="59859">MTRYIFITGGVVSSLGKGLASAALGALLQARGYSVRLRKLDPYLNVDPGTMSPIQHGEVYVTDDGAETDLDLGHYERFTGVPASRADNITTGRIYQEIIQRERRGDYLGGTVQVIPHVTDAIKEFVLSGNLDVDFVLCEIGGTVGDIEGLPFFEAIRQLGNELDRGQTCYIHLTLLPFIPSAGEMKTKPTQHSVKELRSIGIQPDILMCRCDRPIPKDERRKIALFCNVRETAVIQAMDVDTIYDVPNAYHLEGLDDEVLSVFGIKGSKEPNLAKWQTIAHNIREPEGDVTIAIVGKYTGLKDAYKSLSEALVHGGIANKVRVNVKWVESEVFDTEDTAFYLEDVDGILVPGGFGERGSEGKIRAAQFARTRNVPYFGICFGMQMAVIEALRNVGGLEGASSTEFGPTNEPVVGLMTEWMRENELVKRAAHGDLGGTMRLGAYDAMLAEGSRVAQIYGSTVISERHRHRYEVNMTYREQIEAAGLLMSGVSPDGLLPEIIEIPDHPWYIGVQYHPELKSKPFEPHPLFRSFVEAAVEQSRLV</sequence>
<dbReference type="EC" id="6.3.4.2" evidence="1"/>
<dbReference type="EMBL" id="CP000774">
    <property type="protein sequence ID" value="ABS64762.1"/>
    <property type="molecule type" value="Genomic_DNA"/>
</dbReference>
<dbReference type="RefSeq" id="WP_012112084.1">
    <property type="nucleotide sequence ID" value="NC_009719.1"/>
</dbReference>
<dbReference type="SMR" id="A7HXX9"/>
<dbReference type="STRING" id="402881.Plav_3156"/>
<dbReference type="MEROPS" id="C26.964"/>
<dbReference type="KEGG" id="pla:Plav_3156"/>
<dbReference type="eggNOG" id="COG0504">
    <property type="taxonomic scope" value="Bacteria"/>
</dbReference>
<dbReference type="HOGENOM" id="CLU_011675_5_0_5"/>
<dbReference type="OrthoDB" id="9801107at2"/>
<dbReference type="UniPathway" id="UPA00159">
    <property type="reaction ID" value="UER00277"/>
</dbReference>
<dbReference type="Proteomes" id="UP000006377">
    <property type="component" value="Chromosome"/>
</dbReference>
<dbReference type="GO" id="GO:0005829">
    <property type="term" value="C:cytosol"/>
    <property type="evidence" value="ECO:0007669"/>
    <property type="project" value="TreeGrafter"/>
</dbReference>
<dbReference type="GO" id="GO:0005524">
    <property type="term" value="F:ATP binding"/>
    <property type="evidence" value="ECO:0007669"/>
    <property type="project" value="UniProtKB-KW"/>
</dbReference>
<dbReference type="GO" id="GO:0003883">
    <property type="term" value="F:CTP synthase activity"/>
    <property type="evidence" value="ECO:0007669"/>
    <property type="project" value="UniProtKB-UniRule"/>
</dbReference>
<dbReference type="GO" id="GO:0004359">
    <property type="term" value="F:glutaminase activity"/>
    <property type="evidence" value="ECO:0007669"/>
    <property type="project" value="RHEA"/>
</dbReference>
<dbReference type="GO" id="GO:0042802">
    <property type="term" value="F:identical protein binding"/>
    <property type="evidence" value="ECO:0007669"/>
    <property type="project" value="TreeGrafter"/>
</dbReference>
<dbReference type="GO" id="GO:0046872">
    <property type="term" value="F:metal ion binding"/>
    <property type="evidence" value="ECO:0007669"/>
    <property type="project" value="UniProtKB-KW"/>
</dbReference>
<dbReference type="GO" id="GO:0044210">
    <property type="term" value="P:'de novo' CTP biosynthetic process"/>
    <property type="evidence" value="ECO:0007669"/>
    <property type="project" value="UniProtKB-UniRule"/>
</dbReference>
<dbReference type="GO" id="GO:0019856">
    <property type="term" value="P:pyrimidine nucleobase biosynthetic process"/>
    <property type="evidence" value="ECO:0007669"/>
    <property type="project" value="TreeGrafter"/>
</dbReference>
<dbReference type="CDD" id="cd03113">
    <property type="entry name" value="CTPS_N"/>
    <property type="match status" value="1"/>
</dbReference>
<dbReference type="CDD" id="cd01746">
    <property type="entry name" value="GATase1_CTP_Synthase"/>
    <property type="match status" value="1"/>
</dbReference>
<dbReference type="FunFam" id="3.40.50.300:FF:000009">
    <property type="entry name" value="CTP synthase"/>
    <property type="match status" value="1"/>
</dbReference>
<dbReference type="FunFam" id="3.40.50.880:FF:000002">
    <property type="entry name" value="CTP synthase"/>
    <property type="match status" value="1"/>
</dbReference>
<dbReference type="Gene3D" id="3.40.50.880">
    <property type="match status" value="1"/>
</dbReference>
<dbReference type="Gene3D" id="3.40.50.300">
    <property type="entry name" value="P-loop containing nucleotide triphosphate hydrolases"/>
    <property type="match status" value="1"/>
</dbReference>
<dbReference type="HAMAP" id="MF_01227">
    <property type="entry name" value="PyrG"/>
    <property type="match status" value="1"/>
</dbReference>
<dbReference type="InterPro" id="IPR029062">
    <property type="entry name" value="Class_I_gatase-like"/>
</dbReference>
<dbReference type="InterPro" id="IPR004468">
    <property type="entry name" value="CTP_synthase"/>
</dbReference>
<dbReference type="InterPro" id="IPR017456">
    <property type="entry name" value="CTP_synthase_N"/>
</dbReference>
<dbReference type="InterPro" id="IPR017926">
    <property type="entry name" value="GATASE"/>
</dbReference>
<dbReference type="InterPro" id="IPR033828">
    <property type="entry name" value="GATase1_CTP_Synthase"/>
</dbReference>
<dbReference type="InterPro" id="IPR027417">
    <property type="entry name" value="P-loop_NTPase"/>
</dbReference>
<dbReference type="NCBIfam" id="NF003792">
    <property type="entry name" value="PRK05380.1"/>
    <property type="match status" value="1"/>
</dbReference>
<dbReference type="NCBIfam" id="TIGR00337">
    <property type="entry name" value="PyrG"/>
    <property type="match status" value="1"/>
</dbReference>
<dbReference type="PANTHER" id="PTHR11550">
    <property type="entry name" value="CTP SYNTHASE"/>
    <property type="match status" value="1"/>
</dbReference>
<dbReference type="PANTHER" id="PTHR11550:SF0">
    <property type="entry name" value="CTP SYNTHASE-RELATED"/>
    <property type="match status" value="1"/>
</dbReference>
<dbReference type="Pfam" id="PF06418">
    <property type="entry name" value="CTP_synth_N"/>
    <property type="match status" value="1"/>
</dbReference>
<dbReference type="Pfam" id="PF00117">
    <property type="entry name" value="GATase"/>
    <property type="match status" value="1"/>
</dbReference>
<dbReference type="SUPFAM" id="SSF52317">
    <property type="entry name" value="Class I glutamine amidotransferase-like"/>
    <property type="match status" value="1"/>
</dbReference>
<dbReference type="SUPFAM" id="SSF52540">
    <property type="entry name" value="P-loop containing nucleoside triphosphate hydrolases"/>
    <property type="match status" value="1"/>
</dbReference>
<dbReference type="PROSITE" id="PS51273">
    <property type="entry name" value="GATASE_TYPE_1"/>
    <property type="match status" value="1"/>
</dbReference>
<comment type="function">
    <text evidence="1">Catalyzes the ATP-dependent amination of UTP to CTP with either L-glutamine or ammonia as the source of nitrogen. Regulates intracellular CTP levels through interactions with the four ribonucleotide triphosphates.</text>
</comment>
<comment type="catalytic activity">
    <reaction evidence="1">
        <text>UTP + L-glutamine + ATP + H2O = CTP + L-glutamate + ADP + phosphate + 2 H(+)</text>
        <dbReference type="Rhea" id="RHEA:26426"/>
        <dbReference type="ChEBI" id="CHEBI:15377"/>
        <dbReference type="ChEBI" id="CHEBI:15378"/>
        <dbReference type="ChEBI" id="CHEBI:29985"/>
        <dbReference type="ChEBI" id="CHEBI:30616"/>
        <dbReference type="ChEBI" id="CHEBI:37563"/>
        <dbReference type="ChEBI" id="CHEBI:43474"/>
        <dbReference type="ChEBI" id="CHEBI:46398"/>
        <dbReference type="ChEBI" id="CHEBI:58359"/>
        <dbReference type="ChEBI" id="CHEBI:456216"/>
        <dbReference type="EC" id="6.3.4.2"/>
    </reaction>
</comment>
<comment type="catalytic activity">
    <reaction evidence="1">
        <text>L-glutamine + H2O = L-glutamate + NH4(+)</text>
        <dbReference type="Rhea" id="RHEA:15889"/>
        <dbReference type="ChEBI" id="CHEBI:15377"/>
        <dbReference type="ChEBI" id="CHEBI:28938"/>
        <dbReference type="ChEBI" id="CHEBI:29985"/>
        <dbReference type="ChEBI" id="CHEBI:58359"/>
    </reaction>
</comment>
<comment type="catalytic activity">
    <reaction evidence="1">
        <text>UTP + NH4(+) + ATP = CTP + ADP + phosphate + 2 H(+)</text>
        <dbReference type="Rhea" id="RHEA:16597"/>
        <dbReference type="ChEBI" id="CHEBI:15378"/>
        <dbReference type="ChEBI" id="CHEBI:28938"/>
        <dbReference type="ChEBI" id="CHEBI:30616"/>
        <dbReference type="ChEBI" id="CHEBI:37563"/>
        <dbReference type="ChEBI" id="CHEBI:43474"/>
        <dbReference type="ChEBI" id="CHEBI:46398"/>
        <dbReference type="ChEBI" id="CHEBI:456216"/>
    </reaction>
</comment>
<comment type="activity regulation">
    <text evidence="1">Allosterically activated by GTP, when glutamine is the substrate; GTP has no effect on the reaction when ammonia is the substrate. The allosteric effector GTP functions by stabilizing the protein conformation that binds the tetrahedral intermediate(s) formed during glutamine hydrolysis. Inhibited by the product CTP, via allosteric rather than competitive inhibition.</text>
</comment>
<comment type="pathway">
    <text evidence="1">Pyrimidine metabolism; CTP biosynthesis via de novo pathway; CTP from UDP: step 2/2.</text>
</comment>
<comment type="subunit">
    <text evidence="1">Homotetramer.</text>
</comment>
<comment type="miscellaneous">
    <text evidence="1">CTPSs have evolved a hybrid strategy for distinguishing between UTP and CTP. The overlapping regions of the product feedback inhibitory and substrate sites recognize a common feature in both compounds, the triphosphate moiety. To differentiate isosteric substrate and product pyrimidine rings, an additional pocket far from the expected kinase/ligase catalytic site, specifically recognizes the cytosine and ribose portions of the product inhibitor.</text>
</comment>
<comment type="similarity">
    <text evidence="1">Belongs to the CTP synthase family.</text>
</comment>
<proteinExistence type="inferred from homology"/>